<reference key="1">
    <citation type="submission" date="2007-05" db="EMBL/GenBank/DDBJ databases">
        <title>Complete sequence of Pseudomonas putida F1.</title>
        <authorList>
            <consortium name="US DOE Joint Genome Institute"/>
            <person name="Copeland A."/>
            <person name="Lucas S."/>
            <person name="Lapidus A."/>
            <person name="Barry K."/>
            <person name="Detter J.C."/>
            <person name="Glavina del Rio T."/>
            <person name="Hammon N."/>
            <person name="Israni S."/>
            <person name="Dalin E."/>
            <person name="Tice H."/>
            <person name="Pitluck S."/>
            <person name="Chain P."/>
            <person name="Malfatti S."/>
            <person name="Shin M."/>
            <person name="Vergez L."/>
            <person name="Schmutz J."/>
            <person name="Larimer F."/>
            <person name="Land M."/>
            <person name="Hauser L."/>
            <person name="Kyrpides N."/>
            <person name="Lykidis A."/>
            <person name="Parales R."/>
            <person name="Richardson P."/>
        </authorList>
    </citation>
    <scope>NUCLEOTIDE SEQUENCE [LARGE SCALE GENOMIC DNA]</scope>
    <source>
        <strain>ATCC 700007 / DSM 6899 / JCM 31910 / BCRC 17059 / LMG 24140 / F1</strain>
    </source>
</reference>
<comment type="function">
    <text evidence="1">Ring cyclization and eight-electron oxidation of 3a-(2-amino-2-carboxyethyl)-4,5-dioxo-4,5,6,7,8,9-hexahydroquinoline-7,9-dicarboxylic-acid to PQQ.</text>
</comment>
<comment type="catalytic activity">
    <reaction evidence="1">
        <text>6-(2-amino-2-carboxyethyl)-7,8-dioxo-1,2,3,4,7,8-hexahydroquinoline-2,4-dicarboxylate + 3 O2 = pyrroloquinoline quinone + 2 H2O2 + 2 H2O + H(+)</text>
        <dbReference type="Rhea" id="RHEA:10692"/>
        <dbReference type="ChEBI" id="CHEBI:15377"/>
        <dbReference type="ChEBI" id="CHEBI:15378"/>
        <dbReference type="ChEBI" id="CHEBI:15379"/>
        <dbReference type="ChEBI" id="CHEBI:16240"/>
        <dbReference type="ChEBI" id="CHEBI:58442"/>
        <dbReference type="ChEBI" id="CHEBI:58778"/>
        <dbReference type="EC" id="1.3.3.11"/>
    </reaction>
</comment>
<comment type="pathway">
    <text evidence="1">Cofactor biosynthesis; pyrroloquinoline quinone biosynthesis.</text>
</comment>
<comment type="similarity">
    <text evidence="1">Belongs to the PqqC family.</text>
</comment>
<organism>
    <name type="scientific">Pseudomonas putida (strain ATCC 700007 / DSM 6899 / JCM 31910 / BCRC 17059 / LMG 24140 / F1)</name>
    <dbReference type="NCBI Taxonomy" id="351746"/>
    <lineage>
        <taxon>Bacteria</taxon>
        <taxon>Pseudomonadati</taxon>
        <taxon>Pseudomonadota</taxon>
        <taxon>Gammaproteobacteria</taxon>
        <taxon>Pseudomonadales</taxon>
        <taxon>Pseudomonadaceae</taxon>
        <taxon>Pseudomonas</taxon>
    </lineage>
</organism>
<feature type="chain" id="PRO_1000061675" description="Pyrroloquinoline-quinone synthase">
    <location>
        <begin position="1"/>
        <end position="251"/>
    </location>
</feature>
<accession>A5VXG6</accession>
<evidence type="ECO:0000255" key="1">
    <source>
        <dbReference type="HAMAP-Rule" id="MF_00654"/>
    </source>
</evidence>
<protein>
    <recommendedName>
        <fullName evidence="1">Pyrroloquinoline-quinone synthase</fullName>
        <ecNumber evidence="1">1.3.3.11</ecNumber>
    </recommendedName>
    <alternativeName>
        <fullName evidence="1">Coenzyme PQQ synthesis protein C</fullName>
    </alternativeName>
    <alternativeName>
        <fullName evidence="1">Pyrroloquinoline quinone biosynthesis protein C</fullName>
    </alternativeName>
</protein>
<dbReference type="EC" id="1.3.3.11" evidence="1"/>
<dbReference type="EMBL" id="CP000712">
    <property type="protein sequence ID" value="ABQ76576.1"/>
    <property type="molecule type" value="Genomic_DNA"/>
</dbReference>
<dbReference type="SMR" id="A5VXG6"/>
<dbReference type="KEGG" id="ppf:Pput_0403"/>
<dbReference type="eggNOG" id="COG5424">
    <property type="taxonomic scope" value="Bacteria"/>
</dbReference>
<dbReference type="HOGENOM" id="CLU_080136_0_0_6"/>
<dbReference type="UniPathway" id="UPA00539"/>
<dbReference type="GO" id="GO:0033732">
    <property type="term" value="F:pyrroloquinoline-quinone synthase activity"/>
    <property type="evidence" value="ECO:0007669"/>
    <property type="project" value="UniProtKB-EC"/>
</dbReference>
<dbReference type="GO" id="GO:0018189">
    <property type="term" value="P:pyrroloquinoline quinone biosynthetic process"/>
    <property type="evidence" value="ECO:0007669"/>
    <property type="project" value="UniProtKB-UniRule"/>
</dbReference>
<dbReference type="GO" id="GO:0006790">
    <property type="term" value="P:sulfur compound metabolic process"/>
    <property type="evidence" value="ECO:0007669"/>
    <property type="project" value="UniProtKB-ARBA"/>
</dbReference>
<dbReference type="CDD" id="cd19370">
    <property type="entry name" value="TenA_PqqC"/>
    <property type="match status" value="1"/>
</dbReference>
<dbReference type="Gene3D" id="1.20.910.10">
    <property type="entry name" value="Heme oxygenase-like"/>
    <property type="match status" value="1"/>
</dbReference>
<dbReference type="HAMAP" id="MF_00654">
    <property type="entry name" value="PQQ_syn_PqqC"/>
    <property type="match status" value="1"/>
</dbReference>
<dbReference type="InterPro" id="IPR016084">
    <property type="entry name" value="Haem_Oase-like_multi-hlx"/>
</dbReference>
<dbReference type="InterPro" id="IPR011845">
    <property type="entry name" value="PqqC"/>
</dbReference>
<dbReference type="InterPro" id="IPR039068">
    <property type="entry name" value="PqqC-like"/>
</dbReference>
<dbReference type="InterPro" id="IPR004305">
    <property type="entry name" value="Thiaminase-2/PQQC"/>
</dbReference>
<dbReference type="NCBIfam" id="TIGR02111">
    <property type="entry name" value="PQQ_syn_pqqC"/>
    <property type="match status" value="1"/>
</dbReference>
<dbReference type="PANTHER" id="PTHR40279:SF3">
    <property type="entry name" value="4-AMINOBENZOATE SYNTHASE"/>
    <property type="match status" value="1"/>
</dbReference>
<dbReference type="PANTHER" id="PTHR40279">
    <property type="entry name" value="PQQC-LIKE PROTEIN"/>
    <property type="match status" value="1"/>
</dbReference>
<dbReference type="Pfam" id="PF03070">
    <property type="entry name" value="TENA_THI-4"/>
    <property type="match status" value="1"/>
</dbReference>
<dbReference type="SUPFAM" id="SSF48613">
    <property type="entry name" value="Heme oxygenase-like"/>
    <property type="match status" value="1"/>
</dbReference>
<sequence>MSDALPMSPAEFEQALRAKGAYYHIHHPYHVAMYQGRATREQIQGWVANRFYYQVNIPMKDAAILANCPDREVRREWIQRLLDHDGAPGEDGGIEAWLRLGQAVGLDPDQLRSQELVLPGVRFAVDAYVNFARRASWQEAASSSLTELFAPQIHQSRLDSWPQHYPWIDPAGYEYFRTRLGQARRDVEHGLAITLQHYTTRAGQERMLEILQFKLDILWSMLDAMSMAYELNRPPYHSVTQERMWHKGITL</sequence>
<proteinExistence type="inferred from homology"/>
<gene>
    <name evidence="1" type="primary">pqqC</name>
    <name type="ordered locus">Pput_0403</name>
</gene>
<name>PQQC_PSEP1</name>
<keyword id="KW-0560">Oxidoreductase</keyword>
<keyword id="KW-0884">PQQ biosynthesis</keyword>